<organism>
    <name type="scientific">Polynucleobacter necessarius subsp. necessarius (strain STIR1)</name>
    <dbReference type="NCBI Taxonomy" id="452638"/>
    <lineage>
        <taxon>Bacteria</taxon>
        <taxon>Pseudomonadati</taxon>
        <taxon>Pseudomonadota</taxon>
        <taxon>Betaproteobacteria</taxon>
        <taxon>Burkholderiales</taxon>
        <taxon>Burkholderiaceae</taxon>
        <taxon>Polynucleobacter</taxon>
    </lineage>
</organism>
<protein>
    <recommendedName>
        <fullName evidence="1">Large ribosomal subunit protein uL18</fullName>
    </recommendedName>
    <alternativeName>
        <fullName evidence="2">50S ribosomal protein L18</fullName>
    </alternativeName>
</protein>
<keyword id="KW-0687">Ribonucleoprotein</keyword>
<keyword id="KW-0689">Ribosomal protein</keyword>
<keyword id="KW-0694">RNA-binding</keyword>
<keyword id="KW-0699">rRNA-binding</keyword>
<feature type="chain" id="PRO_1000142699" description="Large ribosomal subunit protein uL18">
    <location>
        <begin position="1"/>
        <end position="117"/>
    </location>
</feature>
<sequence length="117" mass="12849">MNKDESRQRRARQTRIRIAEAQANRLTVIRSNSHISAQVYSPCGTKVVAAASTMEKDLRQAIKNGSYAEAAKQIGKLVAERAVKAGVVDVAFDRSGHRYHGRIKALAEAAREAGLKF</sequence>
<name>RL18_POLNS</name>
<comment type="function">
    <text evidence="1">This is one of the proteins that bind and probably mediate the attachment of the 5S RNA into the large ribosomal subunit, where it forms part of the central protuberance.</text>
</comment>
<comment type="subunit">
    <text evidence="1">Part of the 50S ribosomal subunit; part of the 5S rRNA/L5/L18/L25 subcomplex. Contacts the 5S and 23S rRNAs.</text>
</comment>
<comment type="similarity">
    <text evidence="1">Belongs to the universal ribosomal protein uL18 family.</text>
</comment>
<proteinExistence type="inferred from homology"/>
<gene>
    <name evidence="1" type="primary">rplR</name>
    <name type="ordered locus">Pnec_0066</name>
</gene>
<dbReference type="EMBL" id="CP001010">
    <property type="protein sequence ID" value="ACB43394.1"/>
    <property type="molecule type" value="Genomic_DNA"/>
</dbReference>
<dbReference type="SMR" id="B1XSR7"/>
<dbReference type="STRING" id="452638.Pnec_0066"/>
<dbReference type="KEGG" id="pne:Pnec_0066"/>
<dbReference type="eggNOG" id="COG0256">
    <property type="taxonomic scope" value="Bacteria"/>
</dbReference>
<dbReference type="HOGENOM" id="CLU_098841_0_1_4"/>
<dbReference type="OrthoDB" id="9810939at2"/>
<dbReference type="GO" id="GO:0022625">
    <property type="term" value="C:cytosolic large ribosomal subunit"/>
    <property type="evidence" value="ECO:0007669"/>
    <property type="project" value="TreeGrafter"/>
</dbReference>
<dbReference type="GO" id="GO:0008097">
    <property type="term" value="F:5S rRNA binding"/>
    <property type="evidence" value="ECO:0007669"/>
    <property type="project" value="TreeGrafter"/>
</dbReference>
<dbReference type="GO" id="GO:0003735">
    <property type="term" value="F:structural constituent of ribosome"/>
    <property type="evidence" value="ECO:0007669"/>
    <property type="project" value="InterPro"/>
</dbReference>
<dbReference type="GO" id="GO:0006412">
    <property type="term" value="P:translation"/>
    <property type="evidence" value="ECO:0007669"/>
    <property type="project" value="UniProtKB-UniRule"/>
</dbReference>
<dbReference type="CDD" id="cd00432">
    <property type="entry name" value="Ribosomal_L18_L5e"/>
    <property type="match status" value="1"/>
</dbReference>
<dbReference type="FunFam" id="3.30.420.100:FF:000001">
    <property type="entry name" value="50S ribosomal protein L18"/>
    <property type="match status" value="1"/>
</dbReference>
<dbReference type="Gene3D" id="3.30.420.100">
    <property type="match status" value="1"/>
</dbReference>
<dbReference type="HAMAP" id="MF_01337_B">
    <property type="entry name" value="Ribosomal_uL18_B"/>
    <property type="match status" value="1"/>
</dbReference>
<dbReference type="InterPro" id="IPR004389">
    <property type="entry name" value="Ribosomal_uL18_bac-type"/>
</dbReference>
<dbReference type="InterPro" id="IPR005484">
    <property type="entry name" value="Ribosomal_uL18_bac/euk"/>
</dbReference>
<dbReference type="NCBIfam" id="TIGR00060">
    <property type="entry name" value="L18_bact"/>
    <property type="match status" value="1"/>
</dbReference>
<dbReference type="PANTHER" id="PTHR12899">
    <property type="entry name" value="39S RIBOSOMAL PROTEIN L18, MITOCHONDRIAL"/>
    <property type="match status" value="1"/>
</dbReference>
<dbReference type="PANTHER" id="PTHR12899:SF3">
    <property type="entry name" value="LARGE RIBOSOMAL SUBUNIT PROTEIN UL18M"/>
    <property type="match status" value="1"/>
</dbReference>
<dbReference type="Pfam" id="PF00861">
    <property type="entry name" value="Ribosomal_L18p"/>
    <property type="match status" value="1"/>
</dbReference>
<dbReference type="SUPFAM" id="SSF53137">
    <property type="entry name" value="Translational machinery components"/>
    <property type="match status" value="1"/>
</dbReference>
<accession>B1XSR7</accession>
<reference key="1">
    <citation type="journal article" date="2013" name="Proc. Natl. Acad. Sci. U.S.A.">
        <title>Polynucleobacter necessarius, a model for genome reduction in both free-living and symbiotic bacteria.</title>
        <authorList>
            <person name="Boscaro V."/>
            <person name="Felletti M."/>
            <person name="Vannini C."/>
            <person name="Ackerman M.S."/>
            <person name="Chain P.S."/>
            <person name="Malfatti S."/>
            <person name="Vergez L.M."/>
            <person name="Shin M."/>
            <person name="Doak T.G."/>
            <person name="Lynch M."/>
            <person name="Petroni G."/>
        </authorList>
    </citation>
    <scope>NUCLEOTIDE SEQUENCE [LARGE SCALE GENOMIC DNA]</scope>
    <source>
        <strain>STIR1</strain>
    </source>
</reference>
<evidence type="ECO:0000255" key="1">
    <source>
        <dbReference type="HAMAP-Rule" id="MF_01337"/>
    </source>
</evidence>
<evidence type="ECO:0000305" key="2"/>